<reference key="1">
    <citation type="journal article" date="1997" name="J. Bacteriol.">
        <title>Complete genome sequence of Methanobacterium thermoautotrophicum deltaH: functional analysis and comparative genomics.</title>
        <authorList>
            <person name="Smith D.R."/>
            <person name="Doucette-Stamm L.A."/>
            <person name="Deloughery C."/>
            <person name="Lee H.-M."/>
            <person name="Dubois J."/>
            <person name="Aldredge T."/>
            <person name="Bashirzadeh R."/>
            <person name="Blakely D."/>
            <person name="Cook R."/>
            <person name="Gilbert K."/>
            <person name="Harrison D."/>
            <person name="Hoang L."/>
            <person name="Keagle P."/>
            <person name="Lumm W."/>
            <person name="Pothier B."/>
            <person name="Qiu D."/>
            <person name="Spadafora R."/>
            <person name="Vicare R."/>
            <person name="Wang Y."/>
            <person name="Wierzbowski J."/>
            <person name="Gibson R."/>
            <person name="Jiwani N."/>
            <person name="Caruso A."/>
            <person name="Bush D."/>
            <person name="Safer H."/>
            <person name="Patwell D."/>
            <person name="Prabhakar S."/>
            <person name="McDougall S."/>
            <person name="Shimer G."/>
            <person name="Goyal A."/>
            <person name="Pietrovski S."/>
            <person name="Church G.M."/>
            <person name="Daniels C.J."/>
            <person name="Mao J.-I."/>
            <person name="Rice P."/>
            <person name="Noelling J."/>
            <person name="Reeve J.N."/>
        </authorList>
    </citation>
    <scope>NUCLEOTIDE SEQUENCE [LARGE SCALE GENOMIC DNA]</scope>
    <source>
        <strain>ATCC 29096 / DSM 1053 / JCM 10044 / NBRC 100330 / Delta H</strain>
    </source>
</reference>
<evidence type="ECO:0000255" key="1">
    <source>
        <dbReference type="HAMAP-Rule" id="MF_00628"/>
    </source>
</evidence>
<keyword id="KW-0963">Cytoplasm</keyword>
<keyword id="KW-0378">Hydrolase</keyword>
<keyword id="KW-1185">Reference proteome</keyword>
<feature type="chain" id="PRO_0000120296" description="Peptidyl-tRNA hydrolase">
    <location>
        <begin position="1"/>
        <end position="112"/>
    </location>
</feature>
<dbReference type="EC" id="3.1.1.29" evidence="1"/>
<dbReference type="EMBL" id="AE000666">
    <property type="protein sequence ID" value="AAB86169.1"/>
    <property type="molecule type" value="Genomic_DNA"/>
</dbReference>
<dbReference type="PIR" id="H69093">
    <property type="entry name" value="H69093"/>
</dbReference>
<dbReference type="SMR" id="O27732"/>
<dbReference type="FunCoup" id="O27732">
    <property type="interactions" value="150"/>
</dbReference>
<dbReference type="STRING" id="187420.MTH_1697"/>
<dbReference type="PaxDb" id="187420-MTH_1697"/>
<dbReference type="EnsemblBacteria" id="AAB86169">
    <property type="protein sequence ID" value="AAB86169"/>
    <property type="gene ID" value="MTH_1697"/>
</dbReference>
<dbReference type="KEGG" id="mth:MTH_1697"/>
<dbReference type="PATRIC" id="fig|187420.15.peg.1657"/>
<dbReference type="HOGENOM" id="CLU_073661_2_2_2"/>
<dbReference type="InParanoid" id="O27732"/>
<dbReference type="Proteomes" id="UP000005223">
    <property type="component" value="Chromosome"/>
</dbReference>
<dbReference type="GO" id="GO:0005829">
    <property type="term" value="C:cytosol"/>
    <property type="evidence" value="ECO:0007669"/>
    <property type="project" value="TreeGrafter"/>
</dbReference>
<dbReference type="GO" id="GO:0004045">
    <property type="term" value="F:peptidyl-tRNA hydrolase activity"/>
    <property type="evidence" value="ECO:0007669"/>
    <property type="project" value="UniProtKB-UniRule"/>
</dbReference>
<dbReference type="GO" id="GO:0006412">
    <property type="term" value="P:translation"/>
    <property type="evidence" value="ECO:0007669"/>
    <property type="project" value="UniProtKB-UniRule"/>
</dbReference>
<dbReference type="CDD" id="cd02430">
    <property type="entry name" value="PTH2"/>
    <property type="match status" value="1"/>
</dbReference>
<dbReference type="FunFam" id="3.40.1490.10:FF:000001">
    <property type="entry name" value="Peptidyl-tRNA hydrolase 2"/>
    <property type="match status" value="1"/>
</dbReference>
<dbReference type="Gene3D" id="3.40.1490.10">
    <property type="entry name" value="Bit1"/>
    <property type="match status" value="1"/>
</dbReference>
<dbReference type="HAMAP" id="MF_00628">
    <property type="entry name" value="Pept_tRNA_hydro_arch"/>
    <property type="match status" value="1"/>
</dbReference>
<dbReference type="InterPro" id="IPR023476">
    <property type="entry name" value="Pep_tRNA_hydro_II_dom_sf"/>
</dbReference>
<dbReference type="InterPro" id="IPR034759">
    <property type="entry name" value="Pept_tRNA_hydro_arch"/>
</dbReference>
<dbReference type="InterPro" id="IPR002833">
    <property type="entry name" value="PTH2"/>
</dbReference>
<dbReference type="NCBIfam" id="TIGR00283">
    <property type="entry name" value="arch_pth2"/>
    <property type="match status" value="1"/>
</dbReference>
<dbReference type="NCBIfam" id="NF003314">
    <property type="entry name" value="PRK04322.1"/>
    <property type="match status" value="1"/>
</dbReference>
<dbReference type="PANTHER" id="PTHR12649">
    <property type="entry name" value="PEPTIDYL-TRNA HYDROLASE 2"/>
    <property type="match status" value="1"/>
</dbReference>
<dbReference type="PANTHER" id="PTHR12649:SF11">
    <property type="entry name" value="PEPTIDYL-TRNA HYDROLASE 2, MITOCHONDRIAL"/>
    <property type="match status" value="1"/>
</dbReference>
<dbReference type="Pfam" id="PF01981">
    <property type="entry name" value="PTH2"/>
    <property type="match status" value="1"/>
</dbReference>
<dbReference type="SUPFAM" id="SSF102462">
    <property type="entry name" value="Peptidyl-tRNA hydrolase II"/>
    <property type="match status" value="1"/>
</dbReference>
<protein>
    <recommendedName>
        <fullName evidence="1">Peptidyl-tRNA hydrolase</fullName>
        <shortName evidence="1">PTH</shortName>
        <ecNumber evidence="1">3.1.1.29</ecNumber>
    </recommendedName>
</protein>
<accession>O27732</accession>
<name>PTH_METTH</name>
<proteinExistence type="inferred from homology"/>
<organism>
    <name type="scientific">Methanothermobacter thermautotrophicus (strain ATCC 29096 / DSM 1053 / JCM 10044 / NBRC 100330 / Delta H)</name>
    <name type="common">Methanobacterium thermoautotrophicum</name>
    <dbReference type="NCBI Taxonomy" id="187420"/>
    <lineage>
        <taxon>Archaea</taxon>
        <taxon>Methanobacteriati</taxon>
        <taxon>Methanobacteriota</taxon>
        <taxon>Methanomada group</taxon>
        <taxon>Methanobacteria</taxon>
        <taxon>Methanobacteriales</taxon>
        <taxon>Methanobacteriaceae</taxon>
        <taxon>Methanothermobacter</taxon>
    </lineage>
</organism>
<comment type="function">
    <text evidence="1">The natural substrate for this enzyme may be peptidyl-tRNAs which drop off the ribosome during protein synthesis.</text>
</comment>
<comment type="catalytic activity">
    <reaction evidence="1">
        <text>an N-acyl-L-alpha-aminoacyl-tRNA + H2O = an N-acyl-L-amino acid + a tRNA + H(+)</text>
        <dbReference type="Rhea" id="RHEA:54448"/>
        <dbReference type="Rhea" id="RHEA-COMP:10123"/>
        <dbReference type="Rhea" id="RHEA-COMP:13883"/>
        <dbReference type="ChEBI" id="CHEBI:15377"/>
        <dbReference type="ChEBI" id="CHEBI:15378"/>
        <dbReference type="ChEBI" id="CHEBI:59874"/>
        <dbReference type="ChEBI" id="CHEBI:78442"/>
        <dbReference type="ChEBI" id="CHEBI:138191"/>
        <dbReference type="EC" id="3.1.1.29"/>
    </reaction>
</comment>
<comment type="subcellular location">
    <subcellularLocation>
        <location evidence="1">Cytoplasm</location>
    </subcellularLocation>
</comment>
<comment type="similarity">
    <text evidence="1">Belongs to the PTH2 family.</text>
</comment>
<gene>
    <name evidence="1" type="primary">pth</name>
    <name type="ordered locus">MTH_1697</name>
</gene>
<sequence>MKQVIIVRSDLKMGKGKIAAQACHASIGSFKRTEEDKIRKWELEGSKKVIVSVNSLDELLEIYRAVKEAGISNYLVRDAGHTQIPAGTITCLGIGPDDDEKIDKITGDLKLL</sequence>